<organism>
    <name type="scientific">Escherichia coli O157:H7 (strain EC4115 / EHEC)</name>
    <dbReference type="NCBI Taxonomy" id="444450"/>
    <lineage>
        <taxon>Bacteria</taxon>
        <taxon>Pseudomonadati</taxon>
        <taxon>Pseudomonadota</taxon>
        <taxon>Gammaproteobacteria</taxon>
        <taxon>Enterobacterales</taxon>
        <taxon>Enterobacteriaceae</taxon>
        <taxon>Escherichia</taxon>
    </lineage>
</organism>
<keyword id="KW-0143">Chaperone</keyword>
<keyword id="KW-0963">Cytoplasm</keyword>
<keyword id="KW-0690">Ribosome biogenesis</keyword>
<keyword id="KW-0698">rRNA processing</keyword>
<evidence type="ECO:0000255" key="1">
    <source>
        <dbReference type="HAMAP-Rule" id="MF_00014"/>
    </source>
</evidence>
<comment type="function">
    <text evidence="1">An accessory protein needed during the final step in the assembly of 30S ribosomal subunit, possibly for assembly of the head region. Essential for efficient processing of 16S rRNA. May be needed both before and after RbfA during the maturation of 16S rRNA. It has affinity for free ribosomal 30S subunits but not for 70S ribosomes.</text>
</comment>
<comment type="subunit">
    <text evidence="1">Binds ribosomal protein uS19.</text>
</comment>
<comment type="subcellular location">
    <subcellularLocation>
        <location evidence="1">Cytoplasm</location>
    </subcellularLocation>
</comment>
<comment type="domain">
    <text evidence="1">The PRC barrel domain binds ribosomal protein uS19.</text>
</comment>
<comment type="similarity">
    <text evidence="1">Belongs to the RimM family.</text>
</comment>
<proteinExistence type="inferred from homology"/>
<dbReference type="EMBL" id="CP001164">
    <property type="protein sequence ID" value="ACI35323.1"/>
    <property type="molecule type" value="Genomic_DNA"/>
</dbReference>
<dbReference type="SMR" id="B5Z227"/>
<dbReference type="KEGG" id="ecf:ECH74115_3847"/>
<dbReference type="HOGENOM" id="CLU_077636_1_0_6"/>
<dbReference type="GO" id="GO:0005737">
    <property type="term" value="C:cytoplasm"/>
    <property type="evidence" value="ECO:0007669"/>
    <property type="project" value="UniProtKB-SubCell"/>
</dbReference>
<dbReference type="GO" id="GO:0005840">
    <property type="term" value="C:ribosome"/>
    <property type="evidence" value="ECO:0007669"/>
    <property type="project" value="InterPro"/>
</dbReference>
<dbReference type="GO" id="GO:0043022">
    <property type="term" value="F:ribosome binding"/>
    <property type="evidence" value="ECO:0007669"/>
    <property type="project" value="InterPro"/>
</dbReference>
<dbReference type="GO" id="GO:0042274">
    <property type="term" value="P:ribosomal small subunit biogenesis"/>
    <property type="evidence" value="ECO:0007669"/>
    <property type="project" value="UniProtKB-UniRule"/>
</dbReference>
<dbReference type="GO" id="GO:0006364">
    <property type="term" value="P:rRNA processing"/>
    <property type="evidence" value="ECO:0007669"/>
    <property type="project" value="UniProtKB-UniRule"/>
</dbReference>
<dbReference type="FunFam" id="2.30.30.240:FF:000001">
    <property type="entry name" value="Ribosome maturation factor RimM"/>
    <property type="match status" value="1"/>
</dbReference>
<dbReference type="FunFam" id="2.40.30.60:FF:000001">
    <property type="entry name" value="Ribosome maturation factor RimM"/>
    <property type="match status" value="1"/>
</dbReference>
<dbReference type="Gene3D" id="2.30.30.240">
    <property type="entry name" value="PRC-barrel domain"/>
    <property type="match status" value="1"/>
</dbReference>
<dbReference type="Gene3D" id="2.40.30.60">
    <property type="entry name" value="RimM"/>
    <property type="match status" value="1"/>
</dbReference>
<dbReference type="HAMAP" id="MF_00014">
    <property type="entry name" value="Ribosome_mat_RimM"/>
    <property type="match status" value="1"/>
</dbReference>
<dbReference type="InterPro" id="IPR011033">
    <property type="entry name" value="PRC_barrel-like_sf"/>
</dbReference>
<dbReference type="InterPro" id="IPR056792">
    <property type="entry name" value="PRC_RimM"/>
</dbReference>
<dbReference type="InterPro" id="IPR011961">
    <property type="entry name" value="RimM"/>
</dbReference>
<dbReference type="InterPro" id="IPR002676">
    <property type="entry name" value="RimM_N"/>
</dbReference>
<dbReference type="InterPro" id="IPR036976">
    <property type="entry name" value="RimM_N_sf"/>
</dbReference>
<dbReference type="InterPro" id="IPR009000">
    <property type="entry name" value="Transl_B-barrel_sf"/>
</dbReference>
<dbReference type="NCBIfam" id="TIGR02273">
    <property type="entry name" value="16S_RimM"/>
    <property type="match status" value="1"/>
</dbReference>
<dbReference type="PANTHER" id="PTHR33692">
    <property type="entry name" value="RIBOSOME MATURATION FACTOR RIMM"/>
    <property type="match status" value="1"/>
</dbReference>
<dbReference type="PANTHER" id="PTHR33692:SF1">
    <property type="entry name" value="RIBOSOME MATURATION FACTOR RIMM"/>
    <property type="match status" value="1"/>
</dbReference>
<dbReference type="Pfam" id="PF24986">
    <property type="entry name" value="PRC_RimM"/>
    <property type="match status" value="1"/>
</dbReference>
<dbReference type="Pfam" id="PF01782">
    <property type="entry name" value="RimM"/>
    <property type="match status" value="1"/>
</dbReference>
<dbReference type="SUPFAM" id="SSF50346">
    <property type="entry name" value="PRC-barrel domain"/>
    <property type="match status" value="1"/>
</dbReference>
<dbReference type="SUPFAM" id="SSF50447">
    <property type="entry name" value="Translation proteins"/>
    <property type="match status" value="1"/>
</dbReference>
<sequence length="183" mass="20737">MMSKQLTAQAPVDPIVLGKMGSSYGIRGWLRVFSSTEDAESIFDYQPWFIQKAGQWQQVQLESWKHHNQDMIIKLKGVDDRDAANLLTNCEIVVDSSQLPQLEEGDYYWKDLMGCQVVTTEGYDLGKVVDMMETGSNDVLVIKANLKDAFGIKERLVPFLDGQVIKKVDLTTRSIEVDWDPGF</sequence>
<accession>B5Z227</accession>
<reference key="1">
    <citation type="journal article" date="2011" name="Proc. Natl. Acad. Sci. U.S.A.">
        <title>Genomic anatomy of Escherichia coli O157:H7 outbreaks.</title>
        <authorList>
            <person name="Eppinger M."/>
            <person name="Mammel M.K."/>
            <person name="Leclerc J.E."/>
            <person name="Ravel J."/>
            <person name="Cebula T.A."/>
        </authorList>
    </citation>
    <scope>NUCLEOTIDE SEQUENCE [LARGE SCALE GENOMIC DNA]</scope>
    <source>
        <strain>EC4115 / EHEC</strain>
    </source>
</reference>
<feature type="chain" id="PRO_1000089498" description="Ribosome maturation factor RimM">
    <location>
        <begin position="1"/>
        <end position="183"/>
    </location>
</feature>
<feature type="domain" description="PRC barrel" evidence="1">
    <location>
        <begin position="103"/>
        <end position="183"/>
    </location>
</feature>
<name>RIMM_ECO5E</name>
<protein>
    <recommendedName>
        <fullName evidence="1">Ribosome maturation factor RimM</fullName>
    </recommendedName>
</protein>
<gene>
    <name evidence="1" type="primary">rimM</name>
    <name type="ordered locus">ECH74115_3847</name>
</gene>